<feature type="initiator methionine" description="Removed" evidence="1">
    <location>
        <position position="1"/>
    </location>
</feature>
<feature type="chain" id="PRO_0000198404" description="Met repressor">
    <location>
        <begin position="2"/>
        <end position="105"/>
    </location>
</feature>
<name>METJ_SALTI</name>
<protein>
    <recommendedName>
        <fullName>Met repressor</fullName>
    </recommendedName>
    <alternativeName>
        <fullName>Met regulon regulatory protein MetJ</fullName>
    </alternativeName>
</protein>
<sequence length="105" mass="12142">MAEWSGEYISPYAEHGKKSEQVKKITVSIPLKVLKILTDERTRRQVNNLRHATNSELLCEAFLHAFTGQPLPDDADLRKERSDEIPEAAKEIMREMGIDPETWEY</sequence>
<evidence type="ECO:0000250" key="1"/>
<evidence type="ECO:0000305" key="2"/>
<reference key="1">
    <citation type="journal article" date="2001" name="Nature">
        <title>Complete genome sequence of a multiple drug resistant Salmonella enterica serovar Typhi CT18.</title>
        <authorList>
            <person name="Parkhill J."/>
            <person name="Dougan G."/>
            <person name="James K.D."/>
            <person name="Thomson N.R."/>
            <person name="Pickard D."/>
            <person name="Wain J."/>
            <person name="Churcher C.M."/>
            <person name="Mungall K.L."/>
            <person name="Bentley S.D."/>
            <person name="Holden M.T.G."/>
            <person name="Sebaihia M."/>
            <person name="Baker S."/>
            <person name="Basham D."/>
            <person name="Brooks K."/>
            <person name="Chillingworth T."/>
            <person name="Connerton P."/>
            <person name="Cronin A."/>
            <person name="Davis P."/>
            <person name="Davies R.M."/>
            <person name="Dowd L."/>
            <person name="White N."/>
            <person name="Farrar J."/>
            <person name="Feltwell T."/>
            <person name="Hamlin N."/>
            <person name="Haque A."/>
            <person name="Hien T.T."/>
            <person name="Holroyd S."/>
            <person name="Jagels K."/>
            <person name="Krogh A."/>
            <person name="Larsen T.S."/>
            <person name="Leather S."/>
            <person name="Moule S."/>
            <person name="O'Gaora P."/>
            <person name="Parry C."/>
            <person name="Quail M.A."/>
            <person name="Rutherford K.M."/>
            <person name="Simmonds M."/>
            <person name="Skelton J."/>
            <person name="Stevens K."/>
            <person name="Whitehead S."/>
            <person name="Barrell B.G."/>
        </authorList>
    </citation>
    <scope>NUCLEOTIDE SEQUENCE [LARGE SCALE GENOMIC DNA]</scope>
    <source>
        <strain>CT18</strain>
    </source>
</reference>
<reference key="2">
    <citation type="journal article" date="2003" name="J. Bacteriol.">
        <title>Comparative genomics of Salmonella enterica serovar Typhi strains Ty2 and CT18.</title>
        <authorList>
            <person name="Deng W."/>
            <person name="Liou S.-R."/>
            <person name="Plunkett G. III"/>
            <person name="Mayhew G.F."/>
            <person name="Rose D.J."/>
            <person name="Burland V."/>
            <person name="Kodoyianni V."/>
            <person name="Schwartz D.C."/>
            <person name="Blattner F.R."/>
        </authorList>
    </citation>
    <scope>NUCLEOTIDE SEQUENCE [LARGE SCALE GENOMIC DNA]</scope>
    <source>
        <strain>ATCC 700931 / Ty2</strain>
    </source>
</reference>
<accession>Q8Z2Z4</accession>
<proteinExistence type="inferred from homology"/>
<comment type="function">
    <text evidence="1">This regulatory protein, when combined with SAM (S-adenosylmethionine) represses the expression of the methionine regulon and of enzymes involved in SAM synthesis. It is also autoregulated (By similarity).</text>
</comment>
<comment type="subunit">
    <text evidence="1">Homodimer.</text>
</comment>
<comment type="subcellular location">
    <subcellularLocation>
        <location evidence="1">Cytoplasm</location>
    </subcellularLocation>
</comment>
<comment type="domain">
    <text>Does not bind DNA by a helix-turn-helix motif.</text>
</comment>
<comment type="similarity">
    <text evidence="2">Belongs to the MetJ family.</text>
</comment>
<organism>
    <name type="scientific">Salmonella typhi</name>
    <dbReference type="NCBI Taxonomy" id="90370"/>
    <lineage>
        <taxon>Bacteria</taxon>
        <taxon>Pseudomonadati</taxon>
        <taxon>Pseudomonadota</taxon>
        <taxon>Gammaproteobacteria</taxon>
        <taxon>Enterobacterales</taxon>
        <taxon>Enterobacteriaceae</taxon>
        <taxon>Salmonella</taxon>
    </lineage>
</organism>
<gene>
    <name type="primary">metJ</name>
    <name type="ordered locus">STY3770</name>
    <name type="ordered locus">t3519</name>
</gene>
<dbReference type="EMBL" id="AL513382">
    <property type="protein sequence ID" value="CAD09524.1"/>
    <property type="molecule type" value="Genomic_DNA"/>
</dbReference>
<dbReference type="EMBL" id="AE014613">
    <property type="protein sequence ID" value="AAO71027.1"/>
    <property type="molecule type" value="Genomic_DNA"/>
</dbReference>
<dbReference type="RefSeq" id="NP_457954.1">
    <property type="nucleotide sequence ID" value="NC_003198.1"/>
</dbReference>
<dbReference type="RefSeq" id="WP_000852811.1">
    <property type="nucleotide sequence ID" value="NZ_WSUR01000010.1"/>
</dbReference>
<dbReference type="SMR" id="Q8Z2Z4"/>
<dbReference type="STRING" id="220341.gene:17587635"/>
<dbReference type="GeneID" id="66758351"/>
<dbReference type="KEGG" id="stt:t3519"/>
<dbReference type="KEGG" id="sty:STY3770"/>
<dbReference type="PATRIC" id="fig|220341.7.peg.3846"/>
<dbReference type="eggNOG" id="COG3060">
    <property type="taxonomic scope" value="Bacteria"/>
</dbReference>
<dbReference type="HOGENOM" id="CLU_142318_0_0_6"/>
<dbReference type="OMA" id="KWNGEYI"/>
<dbReference type="OrthoDB" id="5680896at2"/>
<dbReference type="Proteomes" id="UP000000541">
    <property type="component" value="Chromosome"/>
</dbReference>
<dbReference type="Proteomes" id="UP000002670">
    <property type="component" value="Chromosome"/>
</dbReference>
<dbReference type="GO" id="GO:0005737">
    <property type="term" value="C:cytoplasm"/>
    <property type="evidence" value="ECO:0007669"/>
    <property type="project" value="UniProtKB-SubCell"/>
</dbReference>
<dbReference type="GO" id="GO:0003677">
    <property type="term" value="F:DNA binding"/>
    <property type="evidence" value="ECO:0007669"/>
    <property type="project" value="UniProtKB-KW"/>
</dbReference>
<dbReference type="GO" id="GO:0003700">
    <property type="term" value="F:DNA-binding transcription factor activity"/>
    <property type="evidence" value="ECO:0007669"/>
    <property type="project" value="InterPro"/>
</dbReference>
<dbReference type="GO" id="GO:0009086">
    <property type="term" value="P:methionine biosynthetic process"/>
    <property type="evidence" value="ECO:0007669"/>
    <property type="project" value="UniProtKB-UniRule"/>
</dbReference>
<dbReference type="GO" id="GO:0045892">
    <property type="term" value="P:negative regulation of DNA-templated transcription"/>
    <property type="evidence" value="ECO:0007669"/>
    <property type="project" value="UniProtKB-UniRule"/>
</dbReference>
<dbReference type="CDD" id="cd00490">
    <property type="entry name" value="Met_repressor_MetJ"/>
    <property type="match status" value="1"/>
</dbReference>
<dbReference type="FunFam" id="1.10.140.10:FF:000001">
    <property type="entry name" value="Met repressor"/>
    <property type="match status" value="1"/>
</dbReference>
<dbReference type="Gene3D" id="1.10.140.10">
    <property type="entry name" value="MET Apo-Repressor, subunit A"/>
    <property type="match status" value="1"/>
</dbReference>
<dbReference type="HAMAP" id="MF_00744">
    <property type="entry name" value="MetJ"/>
    <property type="match status" value="1"/>
</dbReference>
<dbReference type="InterPro" id="IPR002084">
    <property type="entry name" value="Met_repressor_MetJ"/>
</dbReference>
<dbReference type="InterPro" id="IPR023453">
    <property type="entry name" value="Met_repressor_MetJ_dom_sf"/>
</dbReference>
<dbReference type="InterPro" id="IPR010985">
    <property type="entry name" value="Ribbon_hlx_hlx"/>
</dbReference>
<dbReference type="NCBIfam" id="NF003622">
    <property type="entry name" value="PRK05264.1"/>
    <property type="match status" value="1"/>
</dbReference>
<dbReference type="Pfam" id="PF01340">
    <property type="entry name" value="MetJ"/>
    <property type="match status" value="1"/>
</dbReference>
<dbReference type="SUPFAM" id="SSF47598">
    <property type="entry name" value="Ribbon-helix-helix"/>
    <property type="match status" value="1"/>
</dbReference>
<keyword id="KW-0028">Amino-acid biosynthesis</keyword>
<keyword id="KW-0963">Cytoplasm</keyword>
<keyword id="KW-0238">DNA-binding</keyword>
<keyword id="KW-0486">Methionine biosynthesis</keyword>
<keyword id="KW-0678">Repressor</keyword>
<keyword id="KW-0804">Transcription</keyword>
<keyword id="KW-0805">Transcription regulation</keyword>